<evidence type="ECO:0000255" key="1">
    <source>
        <dbReference type="HAMAP-Rule" id="MF_01341"/>
    </source>
</evidence>
<evidence type="ECO:0000256" key="2">
    <source>
        <dbReference type="SAM" id="MobiDB-lite"/>
    </source>
</evidence>
<evidence type="ECO:0000305" key="3"/>
<feature type="chain" id="PRO_0000104778" description="Large ribosomal subunit protein uL15">
    <location>
        <begin position="1"/>
        <end position="148"/>
    </location>
</feature>
<feature type="region of interest" description="Disordered" evidence="2">
    <location>
        <begin position="1"/>
        <end position="51"/>
    </location>
</feature>
<feature type="compositionally biased region" description="Gly residues" evidence="2">
    <location>
        <begin position="21"/>
        <end position="31"/>
    </location>
</feature>
<dbReference type="EMBL" id="AE015924">
    <property type="protein sequence ID" value="AAQ66900.1"/>
    <property type="molecule type" value="Genomic_DNA"/>
</dbReference>
<dbReference type="RefSeq" id="WP_010956441.1">
    <property type="nucleotide sequence ID" value="NC_002950.2"/>
</dbReference>
<dbReference type="SMR" id="Q7MTN2"/>
<dbReference type="STRING" id="242619.PG_1919"/>
<dbReference type="EnsemblBacteria" id="AAQ66900">
    <property type="protein sequence ID" value="AAQ66900"/>
    <property type="gene ID" value="PG_1919"/>
</dbReference>
<dbReference type="KEGG" id="pgi:PG_1919"/>
<dbReference type="eggNOG" id="COG0200">
    <property type="taxonomic scope" value="Bacteria"/>
</dbReference>
<dbReference type="HOGENOM" id="CLU_055188_4_2_10"/>
<dbReference type="Proteomes" id="UP000000588">
    <property type="component" value="Chromosome"/>
</dbReference>
<dbReference type="GO" id="GO:0022625">
    <property type="term" value="C:cytosolic large ribosomal subunit"/>
    <property type="evidence" value="ECO:0007669"/>
    <property type="project" value="TreeGrafter"/>
</dbReference>
<dbReference type="GO" id="GO:0019843">
    <property type="term" value="F:rRNA binding"/>
    <property type="evidence" value="ECO:0007669"/>
    <property type="project" value="UniProtKB-UniRule"/>
</dbReference>
<dbReference type="GO" id="GO:0003735">
    <property type="term" value="F:structural constituent of ribosome"/>
    <property type="evidence" value="ECO:0007669"/>
    <property type="project" value="InterPro"/>
</dbReference>
<dbReference type="GO" id="GO:0006412">
    <property type="term" value="P:translation"/>
    <property type="evidence" value="ECO:0007669"/>
    <property type="project" value="UniProtKB-UniRule"/>
</dbReference>
<dbReference type="Gene3D" id="3.100.10.10">
    <property type="match status" value="1"/>
</dbReference>
<dbReference type="HAMAP" id="MF_01341">
    <property type="entry name" value="Ribosomal_uL15"/>
    <property type="match status" value="1"/>
</dbReference>
<dbReference type="InterPro" id="IPR030878">
    <property type="entry name" value="Ribosomal_uL15"/>
</dbReference>
<dbReference type="InterPro" id="IPR021131">
    <property type="entry name" value="Ribosomal_uL15/eL18"/>
</dbReference>
<dbReference type="InterPro" id="IPR036227">
    <property type="entry name" value="Ribosomal_uL15/eL18_sf"/>
</dbReference>
<dbReference type="InterPro" id="IPR005749">
    <property type="entry name" value="Ribosomal_uL15_bac-type"/>
</dbReference>
<dbReference type="InterPro" id="IPR001196">
    <property type="entry name" value="Ribosomal_uL15_CS"/>
</dbReference>
<dbReference type="NCBIfam" id="TIGR01071">
    <property type="entry name" value="rplO_bact"/>
    <property type="match status" value="1"/>
</dbReference>
<dbReference type="PANTHER" id="PTHR12934">
    <property type="entry name" value="50S RIBOSOMAL PROTEIN L15"/>
    <property type="match status" value="1"/>
</dbReference>
<dbReference type="PANTHER" id="PTHR12934:SF11">
    <property type="entry name" value="LARGE RIBOSOMAL SUBUNIT PROTEIN UL15M"/>
    <property type="match status" value="1"/>
</dbReference>
<dbReference type="Pfam" id="PF00828">
    <property type="entry name" value="Ribosomal_L27A"/>
    <property type="match status" value="1"/>
</dbReference>
<dbReference type="SUPFAM" id="SSF52080">
    <property type="entry name" value="Ribosomal proteins L15p and L18e"/>
    <property type="match status" value="1"/>
</dbReference>
<dbReference type="PROSITE" id="PS00475">
    <property type="entry name" value="RIBOSOMAL_L15"/>
    <property type="match status" value="1"/>
</dbReference>
<organism>
    <name type="scientific">Porphyromonas gingivalis (strain ATCC BAA-308 / W83)</name>
    <dbReference type="NCBI Taxonomy" id="242619"/>
    <lineage>
        <taxon>Bacteria</taxon>
        <taxon>Pseudomonadati</taxon>
        <taxon>Bacteroidota</taxon>
        <taxon>Bacteroidia</taxon>
        <taxon>Bacteroidales</taxon>
        <taxon>Porphyromonadaceae</taxon>
        <taxon>Porphyromonas</taxon>
    </lineage>
</organism>
<comment type="function">
    <text evidence="1">Binds to the 23S rRNA.</text>
</comment>
<comment type="subunit">
    <text evidence="1">Part of the 50S ribosomal subunit.</text>
</comment>
<comment type="similarity">
    <text evidence="1">Belongs to the universal ribosomal protein uL15 family.</text>
</comment>
<proteinExistence type="inferred from homology"/>
<keyword id="KW-1185">Reference proteome</keyword>
<keyword id="KW-0687">Ribonucleoprotein</keyword>
<keyword id="KW-0689">Ribosomal protein</keyword>
<keyword id="KW-0694">RNA-binding</keyword>
<keyword id="KW-0699">rRNA-binding</keyword>
<reference key="1">
    <citation type="journal article" date="2003" name="J. Bacteriol.">
        <title>Complete genome sequence of the oral pathogenic bacterium Porphyromonas gingivalis strain W83.</title>
        <authorList>
            <person name="Nelson K.E."/>
            <person name="Fleischmann R.D."/>
            <person name="DeBoy R.T."/>
            <person name="Paulsen I.T."/>
            <person name="Fouts D.E."/>
            <person name="Eisen J.A."/>
            <person name="Daugherty S.C."/>
            <person name="Dodson R.J."/>
            <person name="Durkin A.S."/>
            <person name="Gwinn M.L."/>
            <person name="Haft D.H."/>
            <person name="Kolonay J.F."/>
            <person name="Nelson W.C."/>
            <person name="Mason T.M."/>
            <person name="Tallon L."/>
            <person name="Gray J."/>
            <person name="Granger D."/>
            <person name="Tettelin H."/>
            <person name="Dong H."/>
            <person name="Galvin J.L."/>
            <person name="Duncan M.J."/>
            <person name="Dewhirst F.E."/>
            <person name="Fraser C.M."/>
        </authorList>
    </citation>
    <scope>NUCLEOTIDE SEQUENCE [LARGE SCALE GENOMIC DNA]</scope>
    <source>
        <strain>ATCC BAA-308 / W83</strain>
    </source>
</reference>
<gene>
    <name evidence="1" type="primary">rplO</name>
    <name type="ordered locus">PG_1919</name>
</gene>
<accession>Q7MTN2</accession>
<sequence length="148" mass="15590">MNLSSLKPAEGAVKSRKRIGRGPGSGLGGTSTRGHKGAKSRSGYSKKIGFEGGQMPIQRRLPKFGFKNINRVEYKPINLSVLQTLSEANSLTKISVEDLIAAGLVSRNSLVKILANGTVTTALTVEAHAFSKTAEEAIVRAGGSVVKL</sequence>
<name>RL15_PORGI</name>
<protein>
    <recommendedName>
        <fullName evidence="1">Large ribosomal subunit protein uL15</fullName>
    </recommendedName>
    <alternativeName>
        <fullName evidence="3">50S ribosomal protein L15</fullName>
    </alternativeName>
</protein>